<organismHost>
    <name type="scientific">Homo sapiens</name>
    <name type="common">Human</name>
    <dbReference type="NCBI Taxonomy" id="9606"/>
</organismHost>
<comment type="function">
    <text evidence="1">Tegument protein that plays different roles during the time course of infection (By similarity). Participates in both the accumulation of viral mRNAs and viral protein translation at late time of infection (By similarity). Modulates the RNase activity of the virion host shutoff protein ORF17 probably to ensure necessary levels of key cellular mRNAs and proteins (By similarity). Plays a role in microtubule reorganization that occurs after viral infection by stabilizing microtubule network (By similarity). Plays a role in the inhibition of host innate immune system by targeting the CGAS enzymatic activity which is the principal cytosolic DNA sensor that detects invading viral DNA. Acts by mediating disruption of liquid-like droplets in which CGAS is activated, thereby preventing CGAS activity (By similarity).</text>
</comment>
<comment type="subunit">
    <text evidence="1">Interacts with gE (via C-terminus); this interaction is necessary for the recruitment of VP22/ORF9 to the Golgi and its packaging into virions (By similarity). Interacts with gM (via C-terminus) (By similarity). Interacts with VP16/ORF10; this interaction allows the formation of a tripartite complex composed of VP16/ORF10, VP22/ORF9 and VHS/ORF17 (By similarity). Interacts with the capsid-binding protein ORF44 (By similarity). Interacts with host CGAS (By similarity).</text>
</comment>
<comment type="subcellular location">
    <subcellularLocation>
        <location evidence="1">Virion tegument</location>
    </subcellularLocation>
    <subcellularLocation>
        <location evidence="1">Host cytoplasm</location>
    </subcellularLocation>
    <subcellularLocation>
        <location evidence="1">Host nucleus</location>
    </subcellularLocation>
    <subcellularLocation>
        <location evidence="1">Host Golgi apparatus</location>
    </subcellularLocation>
    <text evidence="1">One of the most abundant tegument protein (about 2000 copies per virion). Localizes in the cytoplasm at 8 hours postinfection and in the nucleus at 16 hours postinfection. During virion morphogenesis, this protein probably accumulates at the trans-Golgi where secondary envelopment occurs.</text>
</comment>
<comment type="PTM">
    <text evidence="1">Highly phosphorylated in the host cell. Packaging is selective for underphosphorylated forms.</text>
</comment>
<comment type="similarity">
    <text evidence="4">Belongs to the alphaherpesvirinae VP22 tegument protein family.</text>
</comment>
<reference key="1">
    <citation type="journal article" date="1986" name="J. Gen. Virol.">
        <title>The complete DNA sequence of varicella-zoster virus.</title>
        <authorList>
            <person name="Davison A.J."/>
            <person name="Scott J.E."/>
        </authorList>
    </citation>
    <scope>NUCLEOTIDE SEQUENCE [LARGE SCALE GENOMIC DNA]</scope>
</reference>
<sequence>MASSDGDRLCRSNAVRRKTTPSYSGQYRTARRSVVVGPPDDSDDSLGYITTVGADSPSPVYADLYFEHKNTTPRVHQPNDSSGSEDDFEDIDEVVAAFREARLRHELVEDAVYENPLSVEKPSRSFTKNAAVKPKLEDSPKRAPPGAGAIASGRPISFSTAPKTATSSWCGPTPSYNKRVFCEAVRRVAAMQAQKAAEAAWNSNPPRNNAELDRLLTGAVIRITVHEGLNLIQAANEADLGEGASVSKRGHNRKTGDLQGGMGNEPMYAQVRKPKSRTDTQTTGRITNRSRARSASRTDTRK</sequence>
<keyword id="KW-1035">Host cytoplasm</keyword>
<keyword id="KW-1040">Host Golgi apparatus</keyword>
<keyword id="KW-1048">Host nucleus</keyword>
<keyword id="KW-0597">Phosphoprotein</keyword>
<keyword id="KW-1185">Reference proteome</keyword>
<keyword id="KW-0946">Virion</keyword>
<keyword id="KW-0920">Virion tegument</keyword>
<accession>P09272</accession>
<dbReference type="EMBL" id="X04370">
    <property type="protein sequence ID" value="CAA27892.1"/>
    <property type="molecule type" value="Genomic_DNA"/>
</dbReference>
<dbReference type="PIR" id="I27212">
    <property type="entry name" value="WZBE9"/>
</dbReference>
<dbReference type="SMR" id="P09272"/>
<dbReference type="Proteomes" id="UP000002602">
    <property type="component" value="Genome"/>
</dbReference>
<dbReference type="GO" id="GO:0044177">
    <property type="term" value="C:host cell Golgi apparatus"/>
    <property type="evidence" value="ECO:0007669"/>
    <property type="project" value="UniProtKB-SubCell"/>
</dbReference>
<dbReference type="GO" id="GO:0042025">
    <property type="term" value="C:host cell nucleus"/>
    <property type="evidence" value="ECO:0007669"/>
    <property type="project" value="UniProtKB-SubCell"/>
</dbReference>
<dbReference type="GO" id="GO:0019033">
    <property type="term" value="C:viral tegument"/>
    <property type="evidence" value="ECO:0007669"/>
    <property type="project" value="UniProtKB-SubCell"/>
</dbReference>
<dbReference type="InterPro" id="IPR006908">
    <property type="entry name" value="Herpes_UL49"/>
</dbReference>
<dbReference type="Pfam" id="PF04823">
    <property type="entry name" value="Herpes_UL49_2"/>
    <property type="match status" value="1"/>
</dbReference>
<feature type="chain" id="PRO_0000116097" description="Tegument protein VP22">
    <location>
        <begin position="1"/>
        <end position="302"/>
    </location>
</feature>
<feature type="region of interest" description="Disordered" evidence="3">
    <location>
        <begin position="1"/>
        <end position="42"/>
    </location>
</feature>
<feature type="region of interest" description="Disordered" evidence="3">
    <location>
        <begin position="125"/>
        <end position="170"/>
    </location>
</feature>
<feature type="region of interest" description="Interaction with gE" evidence="1">
    <location>
        <begin position="154"/>
        <end position="244"/>
    </location>
</feature>
<feature type="region of interest" description="Disordered" evidence="3">
    <location>
        <begin position="243"/>
        <end position="302"/>
    </location>
</feature>
<feature type="short sequence motif" description="Nuclear export signal" evidence="2">
    <location>
        <begin position="212"/>
        <end position="224"/>
    </location>
</feature>
<feature type="compositionally biased region" description="Basic and acidic residues" evidence="3">
    <location>
        <begin position="1"/>
        <end position="10"/>
    </location>
</feature>
<feature type="compositionally biased region" description="Polar residues" evidence="3">
    <location>
        <begin position="157"/>
        <end position="170"/>
    </location>
</feature>
<organism>
    <name type="scientific">Varicella-zoster virus (strain Dumas)</name>
    <name type="common">HHV-3</name>
    <name type="synonym">Human herpesvirus 3</name>
    <dbReference type="NCBI Taxonomy" id="10338"/>
    <lineage>
        <taxon>Viruses</taxon>
        <taxon>Duplodnaviria</taxon>
        <taxon>Heunggongvirae</taxon>
        <taxon>Peploviricota</taxon>
        <taxon>Herviviricetes</taxon>
        <taxon>Herpesvirales</taxon>
        <taxon>Orthoherpesviridae</taxon>
        <taxon>Alphaherpesvirinae</taxon>
        <taxon>Varicellovirus</taxon>
        <taxon>Varicellovirus humanalpha3</taxon>
        <taxon>Human herpesvirus 3</taxon>
    </lineage>
</organism>
<gene>
    <name type="ORF">ORF9</name>
</gene>
<proteinExistence type="inferred from homology"/>
<name>VP22_VZVD</name>
<protein>
    <recommendedName>
        <fullName>Tegument protein VP22</fullName>
    </recommendedName>
    <alternativeName>
        <fullName>ORF9 protein</fullName>
    </alternativeName>
    <alternativeName>
        <fullName>Tegument protein 9</fullName>
    </alternativeName>
</protein>
<evidence type="ECO:0000250" key="1">
    <source>
        <dbReference type="UniProtKB" id="P10233"/>
    </source>
</evidence>
<evidence type="ECO:0000250" key="2">
    <source>
        <dbReference type="UniProtKB" id="P30022"/>
    </source>
</evidence>
<evidence type="ECO:0000256" key="3">
    <source>
        <dbReference type="SAM" id="MobiDB-lite"/>
    </source>
</evidence>
<evidence type="ECO:0000305" key="4"/>